<dbReference type="EMBL" id="BA000035">
    <property type="protein sequence ID" value="BAC19438.1"/>
    <property type="molecule type" value="Genomic_DNA"/>
</dbReference>
<dbReference type="RefSeq" id="WP_006769008.1">
    <property type="nucleotide sequence ID" value="NC_004369.1"/>
</dbReference>
<dbReference type="SMR" id="Q8FM79"/>
<dbReference type="STRING" id="196164.gene:10743075"/>
<dbReference type="KEGG" id="cef:CE2628"/>
<dbReference type="eggNOG" id="COG0576">
    <property type="taxonomic scope" value="Bacteria"/>
</dbReference>
<dbReference type="HOGENOM" id="CLU_057217_4_0_11"/>
<dbReference type="OrthoDB" id="5191115at2"/>
<dbReference type="Proteomes" id="UP000001409">
    <property type="component" value="Chromosome"/>
</dbReference>
<dbReference type="GO" id="GO:0005737">
    <property type="term" value="C:cytoplasm"/>
    <property type="evidence" value="ECO:0007669"/>
    <property type="project" value="UniProtKB-SubCell"/>
</dbReference>
<dbReference type="GO" id="GO:0000774">
    <property type="term" value="F:adenyl-nucleotide exchange factor activity"/>
    <property type="evidence" value="ECO:0007669"/>
    <property type="project" value="InterPro"/>
</dbReference>
<dbReference type="GO" id="GO:0042803">
    <property type="term" value="F:protein homodimerization activity"/>
    <property type="evidence" value="ECO:0007669"/>
    <property type="project" value="InterPro"/>
</dbReference>
<dbReference type="GO" id="GO:0051087">
    <property type="term" value="F:protein-folding chaperone binding"/>
    <property type="evidence" value="ECO:0007669"/>
    <property type="project" value="InterPro"/>
</dbReference>
<dbReference type="GO" id="GO:0051082">
    <property type="term" value="F:unfolded protein binding"/>
    <property type="evidence" value="ECO:0007669"/>
    <property type="project" value="TreeGrafter"/>
</dbReference>
<dbReference type="GO" id="GO:0006457">
    <property type="term" value="P:protein folding"/>
    <property type="evidence" value="ECO:0007669"/>
    <property type="project" value="InterPro"/>
</dbReference>
<dbReference type="Gene3D" id="3.90.20.20">
    <property type="match status" value="1"/>
</dbReference>
<dbReference type="Gene3D" id="2.30.22.10">
    <property type="entry name" value="Head domain of nucleotide exchange factor GrpE"/>
    <property type="match status" value="1"/>
</dbReference>
<dbReference type="HAMAP" id="MF_01151">
    <property type="entry name" value="GrpE"/>
    <property type="match status" value="1"/>
</dbReference>
<dbReference type="InterPro" id="IPR000740">
    <property type="entry name" value="GrpE"/>
</dbReference>
<dbReference type="InterPro" id="IPR013805">
    <property type="entry name" value="GrpE_coiled_coil"/>
</dbReference>
<dbReference type="InterPro" id="IPR009012">
    <property type="entry name" value="GrpE_head"/>
</dbReference>
<dbReference type="NCBIfam" id="NF010761">
    <property type="entry name" value="PRK14164.1"/>
    <property type="match status" value="1"/>
</dbReference>
<dbReference type="PANTHER" id="PTHR21237">
    <property type="entry name" value="GRPE PROTEIN"/>
    <property type="match status" value="1"/>
</dbReference>
<dbReference type="PANTHER" id="PTHR21237:SF23">
    <property type="entry name" value="GRPE PROTEIN HOMOLOG, MITOCHONDRIAL"/>
    <property type="match status" value="1"/>
</dbReference>
<dbReference type="Pfam" id="PF01025">
    <property type="entry name" value="GrpE"/>
    <property type="match status" value="1"/>
</dbReference>
<dbReference type="PRINTS" id="PR00773">
    <property type="entry name" value="GRPEPROTEIN"/>
</dbReference>
<dbReference type="SUPFAM" id="SSF58014">
    <property type="entry name" value="Coiled-coil domain of nucleotide exchange factor GrpE"/>
    <property type="match status" value="1"/>
</dbReference>
<dbReference type="SUPFAM" id="SSF51064">
    <property type="entry name" value="Head domain of nucleotide exchange factor GrpE"/>
    <property type="match status" value="1"/>
</dbReference>
<dbReference type="PROSITE" id="PS01071">
    <property type="entry name" value="GRPE"/>
    <property type="match status" value="1"/>
</dbReference>
<proteinExistence type="inferred from homology"/>
<protein>
    <recommendedName>
        <fullName evidence="1">Protein GrpE</fullName>
    </recommendedName>
    <alternativeName>
        <fullName evidence="1">HSP-70 cofactor</fullName>
    </alternativeName>
</protein>
<name>GRPE_COREF</name>
<accession>Q8FM79</accession>
<feature type="chain" id="PRO_0000113777" description="Protein GrpE">
    <location>
        <begin position="1"/>
        <end position="237"/>
    </location>
</feature>
<feature type="region of interest" description="Disordered" evidence="2">
    <location>
        <begin position="1"/>
        <end position="65"/>
    </location>
</feature>
<feature type="compositionally biased region" description="Basic and acidic residues" evidence="2">
    <location>
        <begin position="55"/>
        <end position="65"/>
    </location>
</feature>
<evidence type="ECO:0000255" key="1">
    <source>
        <dbReference type="HAMAP-Rule" id="MF_01151"/>
    </source>
</evidence>
<evidence type="ECO:0000256" key="2">
    <source>
        <dbReference type="SAM" id="MobiDB-lite"/>
    </source>
</evidence>
<organism>
    <name type="scientific">Corynebacterium efficiens (strain DSM 44549 / YS-314 / AJ 12310 / JCM 11189 / NBRC 100395)</name>
    <dbReference type="NCBI Taxonomy" id="196164"/>
    <lineage>
        <taxon>Bacteria</taxon>
        <taxon>Bacillati</taxon>
        <taxon>Actinomycetota</taxon>
        <taxon>Actinomycetes</taxon>
        <taxon>Mycobacteriales</taxon>
        <taxon>Corynebacteriaceae</taxon>
        <taxon>Corynebacterium</taxon>
    </lineage>
</organism>
<gene>
    <name evidence="1" type="primary">grpE</name>
    <name type="ordered locus">CE2628</name>
</gene>
<comment type="function">
    <text evidence="1">Participates actively in the response to hyperosmotic and heat shock by preventing the aggregation of stress-denatured proteins, in association with DnaK and GrpE. It is the nucleotide exchange factor for DnaK and may function as a thermosensor. Unfolded proteins bind initially to DnaJ; upon interaction with the DnaJ-bound protein, DnaK hydrolyzes its bound ATP, resulting in the formation of a stable complex. GrpE releases ADP from DnaK; ATP binding to DnaK triggers the release of the substrate protein, thus completing the reaction cycle. Several rounds of ATP-dependent interactions between DnaJ, DnaK and GrpE are required for fully efficient folding.</text>
</comment>
<comment type="subunit">
    <text evidence="1">Homodimer.</text>
</comment>
<comment type="subcellular location">
    <subcellularLocation>
        <location evidence="1">Cytoplasm</location>
    </subcellularLocation>
</comment>
<comment type="similarity">
    <text evidence="1">Belongs to the GrpE family.</text>
</comment>
<keyword id="KW-0143">Chaperone</keyword>
<keyword id="KW-0963">Cytoplasm</keyword>
<keyword id="KW-1185">Reference proteome</keyword>
<keyword id="KW-0346">Stress response</keyword>
<reference key="1">
    <citation type="journal article" date="2003" name="Genome Res.">
        <title>Comparative complete genome sequence analysis of the amino acid replacements responsible for the thermostability of Corynebacterium efficiens.</title>
        <authorList>
            <person name="Nishio Y."/>
            <person name="Nakamura Y."/>
            <person name="Kawarabayasi Y."/>
            <person name="Usuda Y."/>
            <person name="Kimura E."/>
            <person name="Sugimoto S."/>
            <person name="Matsui K."/>
            <person name="Yamagishi A."/>
            <person name="Kikuchi H."/>
            <person name="Ikeo K."/>
            <person name="Gojobori T."/>
        </authorList>
    </citation>
    <scope>NUCLEOTIDE SEQUENCE [LARGE SCALE GENOMIC DNA]</scope>
    <source>
        <strain>DSM 44549 / YS-314 / AJ 12310 / JCM 11189 / NBRC 100395</strain>
    </source>
</reference>
<sequence length="237" mass="26101">MTDSYKLPDNPGDPDATDDEGIHPDEVENLIEEAERTQGGSEDDDLLTTEPDPVVDAREDDRDPTLEEDLEGDLQAVLDDIDAELGVADTPEATGDLPTTEAQLAERTEDLQRVTAEYANYRRRTERERAGIIDTAKSGVVSKLLPILDDLDLAEQHGDLEEGPLKAFADKFRNTLTGLKVEAFGVPGDTFDPEIHEAVQDLSEGDTKVLGTVLRKGYRFNDKLIRNAMVIIADPEK</sequence>